<protein>
    <recommendedName>
        <fullName>Putative uncharacterized protein encoded by AGPAT4-IT1</fullName>
    </recommendedName>
    <alternativeName>
        <fullName>AGPAT4 intronic transcript 1</fullName>
    </alternativeName>
</protein>
<gene>
    <name type="primary">AGPAT4-IT1</name>
    <name type="synonym">C6orf59</name>
    <name type="synonym">NCRNA00241</name>
</gene>
<reference key="1">
    <citation type="journal article" date="2001" name="Genome Res.">
        <title>Towards a catalog of human genes and proteins: sequencing and analysis of 500 novel complete protein coding human cDNAs.</title>
        <authorList>
            <person name="Wiemann S."/>
            <person name="Weil B."/>
            <person name="Wellenreuther R."/>
            <person name="Gassenhuber J."/>
            <person name="Glassl S."/>
            <person name="Ansorge W."/>
            <person name="Boecher M."/>
            <person name="Bloecker H."/>
            <person name="Bauersachs S."/>
            <person name="Blum H."/>
            <person name="Lauber J."/>
            <person name="Duesterhoeft A."/>
            <person name="Beyer A."/>
            <person name="Koehrer K."/>
            <person name="Strack N."/>
            <person name="Mewes H.-W."/>
            <person name="Ottenwaelder B."/>
            <person name="Obermaier B."/>
            <person name="Tampe J."/>
            <person name="Heubner D."/>
            <person name="Wambutt R."/>
            <person name="Korn B."/>
            <person name="Klein M."/>
            <person name="Poustka A."/>
        </authorList>
    </citation>
    <scope>NUCLEOTIDE SEQUENCE [LARGE SCALE MRNA]</scope>
    <source>
        <tissue>Fetal kidney</tissue>
    </source>
</reference>
<reference key="2">
    <citation type="journal article" date="2004" name="Nat. Genet.">
        <title>Complete sequencing and characterization of 21,243 full-length human cDNAs.</title>
        <authorList>
            <person name="Ota T."/>
            <person name="Suzuki Y."/>
            <person name="Nishikawa T."/>
            <person name="Otsuki T."/>
            <person name="Sugiyama T."/>
            <person name="Irie R."/>
            <person name="Wakamatsu A."/>
            <person name="Hayashi K."/>
            <person name="Sato H."/>
            <person name="Nagai K."/>
            <person name="Kimura K."/>
            <person name="Makita H."/>
            <person name="Sekine M."/>
            <person name="Obayashi M."/>
            <person name="Nishi T."/>
            <person name="Shibahara T."/>
            <person name="Tanaka T."/>
            <person name="Ishii S."/>
            <person name="Yamamoto J."/>
            <person name="Saito K."/>
            <person name="Kawai Y."/>
            <person name="Isono Y."/>
            <person name="Nakamura Y."/>
            <person name="Nagahari K."/>
            <person name="Murakami K."/>
            <person name="Yasuda T."/>
            <person name="Iwayanagi T."/>
            <person name="Wagatsuma M."/>
            <person name="Shiratori A."/>
            <person name="Sudo H."/>
            <person name="Hosoiri T."/>
            <person name="Kaku Y."/>
            <person name="Kodaira H."/>
            <person name="Kondo H."/>
            <person name="Sugawara M."/>
            <person name="Takahashi M."/>
            <person name="Kanda K."/>
            <person name="Yokoi T."/>
            <person name="Furuya T."/>
            <person name="Kikkawa E."/>
            <person name="Omura Y."/>
            <person name="Abe K."/>
            <person name="Kamihara K."/>
            <person name="Katsuta N."/>
            <person name="Sato K."/>
            <person name="Tanikawa M."/>
            <person name="Yamazaki M."/>
            <person name="Ninomiya K."/>
            <person name="Ishibashi T."/>
            <person name="Yamashita H."/>
            <person name="Murakawa K."/>
            <person name="Fujimori K."/>
            <person name="Tanai H."/>
            <person name="Kimata M."/>
            <person name="Watanabe M."/>
            <person name="Hiraoka S."/>
            <person name="Chiba Y."/>
            <person name="Ishida S."/>
            <person name="Ono Y."/>
            <person name="Takiguchi S."/>
            <person name="Watanabe S."/>
            <person name="Yosida M."/>
            <person name="Hotuta T."/>
            <person name="Kusano J."/>
            <person name="Kanehori K."/>
            <person name="Takahashi-Fujii A."/>
            <person name="Hara H."/>
            <person name="Tanase T.-O."/>
            <person name="Nomura Y."/>
            <person name="Togiya S."/>
            <person name="Komai F."/>
            <person name="Hara R."/>
            <person name="Takeuchi K."/>
            <person name="Arita M."/>
            <person name="Imose N."/>
            <person name="Musashino K."/>
            <person name="Yuuki H."/>
            <person name="Oshima A."/>
            <person name="Sasaki N."/>
            <person name="Aotsuka S."/>
            <person name="Yoshikawa Y."/>
            <person name="Matsunawa H."/>
            <person name="Ichihara T."/>
            <person name="Shiohata N."/>
            <person name="Sano S."/>
            <person name="Moriya S."/>
            <person name="Momiyama H."/>
            <person name="Satoh N."/>
            <person name="Takami S."/>
            <person name="Terashima Y."/>
            <person name="Suzuki O."/>
            <person name="Nakagawa S."/>
            <person name="Senoh A."/>
            <person name="Mizoguchi H."/>
            <person name="Goto Y."/>
            <person name="Shimizu F."/>
            <person name="Wakebe H."/>
            <person name="Hishigaki H."/>
            <person name="Watanabe T."/>
            <person name="Sugiyama A."/>
            <person name="Takemoto M."/>
            <person name="Kawakami B."/>
            <person name="Yamazaki M."/>
            <person name="Watanabe K."/>
            <person name="Kumagai A."/>
            <person name="Itakura S."/>
            <person name="Fukuzumi Y."/>
            <person name="Fujimori Y."/>
            <person name="Komiyama M."/>
            <person name="Tashiro H."/>
            <person name="Tanigami A."/>
            <person name="Fujiwara T."/>
            <person name="Ono T."/>
            <person name="Yamada K."/>
            <person name="Fujii Y."/>
            <person name="Ozaki K."/>
            <person name="Hirao M."/>
            <person name="Ohmori Y."/>
            <person name="Kawabata A."/>
            <person name="Hikiji T."/>
            <person name="Kobatake N."/>
            <person name="Inagaki H."/>
            <person name="Ikema Y."/>
            <person name="Okamoto S."/>
            <person name="Okitani R."/>
            <person name="Kawakami T."/>
            <person name="Noguchi S."/>
            <person name="Itoh T."/>
            <person name="Shigeta K."/>
            <person name="Senba T."/>
            <person name="Matsumura K."/>
            <person name="Nakajima Y."/>
            <person name="Mizuno T."/>
            <person name="Morinaga M."/>
            <person name="Sasaki M."/>
            <person name="Togashi T."/>
            <person name="Oyama M."/>
            <person name="Hata H."/>
            <person name="Watanabe M."/>
            <person name="Komatsu T."/>
            <person name="Mizushima-Sugano J."/>
            <person name="Satoh T."/>
            <person name="Shirai Y."/>
            <person name="Takahashi Y."/>
            <person name="Nakagawa K."/>
            <person name="Okumura K."/>
            <person name="Nagase T."/>
            <person name="Nomura N."/>
            <person name="Kikuchi H."/>
            <person name="Masuho Y."/>
            <person name="Yamashita R."/>
            <person name="Nakai K."/>
            <person name="Yada T."/>
            <person name="Nakamura Y."/>
            <person name="Ohara O."/>
            <person name="Isogai T."/>
            <person name="Sugano S."/>
        </authorList>
    </citation>
    <scope>NUCLEOTIDE SEQUENCE [LARGE SCALE MRNA]</scope>
    <source>
        <tissue>Lung</tissue>
    </source>
</reference>
<reference key="3">
    <citation type="journal article" date="2003" name="Nature">
        <title>The DNA sequence and analysis of human chromosome 6.</title>
        <authorList>
            <person name="Mungall A.J."/>
            <person name="Palmer S.A."/>
            <person name="Sims S.K."/>
            <person name="Edwards C.A."/>
            <person name="Ashurst J.L."/>
            <person name="Wilming L."/>
            <person name="Jones M.C."/>
            <person name="Horton R."/>
            <person name="Hunt S.E."/>
            <person name="Scott C.E."/>
            <person name="Gilbert J.G.R."/>
            <person name="Clamp M.E."/>
            <person name="Bethel G."/>
            <person name="Milne S."/>
            <person name="Ainscough R."/>
            <person name="Almeida J.P."/>
            <person name="Ambrose K.D."/>
            <person name="Andrews T.D."/>
            <person name="Ashwell R.I.S."/>
            <person name="Babbage A.K."/>
            <person name="Bagguley C.L."/>
            <person name="Bailey J."/>
            <person name="Banerjee R."/>
            <person name="Barker D.J."/>
            <person name="Barlow K.F."/>
            <person name="Bates K."/>
            <person name="Beare D.M."/>
            <person name="Beasley H."/>
            <person name="Beasley O."/>
            <person name="Bird C.P."/>
            <person name="Blakey S.E."/>
            <person name="Bray-Allen S."/>
            <person name="Brook J."/>
            <person name="Brown A.J."/>
            <person name="Brown J.Y."/>
            <person name="Burford D.C."/>
            <person name="Burrill W."/>
            <person name="Burton J."/>
            <person name="Carder C."/>
            <person name="Carter N.P."/>
            <person name="Chapman J.C."/>
            <person name="Clark S.Y."/>
            <person name="Clark G."/>
            <person name="Clee C.M."/>
            <person name="Clegg S."/>
            <person name="Cobley V."/>
            <person name="Collier R.E."/>
            <person name="Collins J.E."/>
            <person name="Colman L.K."/>
            <person name="Corby N.R."/>
            <person name="Coville G.J."/>
            <person name="Culley K.M."/>
            <person name="Dhami P."/>
            <person name="Davies J."/>
            <person name="Dunn M."/>
            <person name="Earthrowl M.E."/>
            <person name="Ellington A.E."/>
            <person name="Evans K.A."/>
            <person name="Faulkner L."/>
            <person name="Francis M.D."/>
            <person name="Frankish A."/>
            <person name="Frankland J."/>
            <person name="French L."/>
            <person name="Garner P."/>
            <person name="Garnett J."/>
            <person name="Ghori M.J."/>
            <person name="Gilby L.M."/>
            <person name="Gillson C.J."/>
            <person name="Glithero R.J."/>
            <person name="Grafham D.V."/>
            <person name="Grant M."/>
            <person name="Gribble S."/>
            <person name="Griffiths C."/>
            <person name="Griffiths M.N.D."/>
            <person name="Hall R."/>
            <person name="Halls K.S."/>
            <person name="Hammond S."/>
            <person name="Harley J.L."/>
            <person name="Hart E.A."/>
            <person name="Heath P.D."/>
            <person name="Heathcott R."/>
            <person name="Holmes S.J."/>
            <person name="Howden P.J."/>
            <person name="Howe K.L."/>
            <person name="Howell G.R."/>
            <person name="Huckle E."/>
            <person name="Humphray S.J."/>
            <person name="Humphries M.D."/>
            <person name="Hunt A.R."/>
            <person name="Johnson C.M."/>
            <person name="Joy A.A."/>
            <person name="Kay M."/>
            <person name="Keenan S.J."/>
            <person name="Kimberley A.M."/>
            <person name="King A."/>
            <person name="Laird G.K."/>
            <person name="Langford C."/>
            <person name="Lawlor S."/>
            <person name="Leongamornlert D.A."/>
            <person name="Leversha M."/>
            <person name="Lloyd C.R."/>
            <person name="Lloyd D.M."/>
            <person name="Loveland J.E."/>
            <person name="Lovell J."/>
            <person name="Martin S."/>
            <person name="Mashreghi-Mohammadi M."/>
            <person name="Maslen G.L."/>
            <person name="Matthews L."/>
            <person name="McCann O.T."/>
            <person name="McLaren S.J."/>
            <person name="McLay K."/>
            <person name="McMurray A."/>
            <person name="Moore M.J.F."/>
            <person name="Mullikin J.C."/>
            <person name="Niblett D."/>
            <person name="Nickerson T."/>
            <person name="Novik K.L."/>
            <person name="Oliver K."/>
            <person name="Overton-Larty E.K."/>
            <person name="Parker A."/>
            <person name="Patel R."/>
            <person name="Pearce A.V."/>
            <person name="Peck A.I."/>
            <person name="Phillimore B.J.C.T."/>
            <person name="Phillips S."/>
            <person name="Plumb R.W."/>
            <person name="Porter K.M."/>
            <person name="Ramsey Y."/>
            <person name="Ranby S.A."/>
            <person name="Rice C.M."/>
            <person name="Ross M.T."/>
            <person name="Searle S.M."/>
            <person name="Sehra H.K."/>
            <person name="Sheridan E."/>
            <person name="Skuce C.D."/>
            <person name="Smith S."/>
            <person name="Smith M."/>
            <person name="Spraggon L."/>
            <person name="Squares S.L."/>
            <person name="Steward C.A."/>
            <person name="Sycamore N."/>
            <person name="Tamlyn-Hall G."/>
            <person name="Tester J."/>
            <person name="Theaker A.J."/>
            <person name="Thomas D.W."/>
            <person name="Thorpe A."/>
            <person name="Tracey A."/>
            <person name="Tromans A."/>
            <person name="Tubby B."/>
            <person name="Wall M."/>
            <person name="Wallis J.M."/>
            <person name="West A.P."/>
            <person name="White S.S."/>
            <person name="Whitehead S.L."/>
            <person name="Whittaker H."/>
            <person name="Wild A."/>
            <person name="Willey D.J."/>
            <person name="Wilmer T.E."/>
            <person name="Wood J.M."/>
            <person name="Wray P.W."/>
            <person name="Wyatt J.C."/>
            <person name="Young L."/>
            <person name="Younger R.M."/>
            <person name="Bentley D.R."/>
            <person name="Coulson A."/>
            <person name="Durbin R.M."/>
            <person name="Hubbard T."/>
            <person name="Sulston J.E."/>
            <person name="Dunham I."/>
            <person name="Rogers J."/>
            <person name="Beck S."/>
        </authorList>
    </citation>
    <scope>NUCLEOTIDE SEQUENCE [LARGE SCALE GENOMIC DNA]</scope>
</reference>
<comment type="caution">
    <text evidence="2">Product of a dubious CDS prediction. May be a non-coding RNA.</text>
</comment>
<comment type="sequence caution" evidence="2">
    <conflict type="frameshift">
        <sequence resource="EMBL-CDS" id="BAB15545"/>
    </conflict>
</comment>
<dbReference type="EMBL" id="AL136708">
    <property type="protein sequence ID" value="CAB66643.1"/>
    <property type="molecule type" value="mRNA"/>
</dbReference>
<dbReference type="EMBL" id="AK026765">
    <property type="protein sequence ID" value="BAB15545.1"/>
    <property type="status" value="ALT_FRAME"/>
    <property type="molecule type" value="mRNA"/>
</dbReference>
<dbReference type="EMBL" id="AL109942">
    <property type="status" value="NOT_ANNOTATED_CDS"/>
    <property type="molecule type" value="Genomic_DNA"/>
</dbReference>
<dbReference type="BioMuta" id="HGNC:20988"/>
<dbReference type="AGR" id="HGNC:20988"/>
<dbReference type="GeneCards" id="AGPAT4-IT1"/>
<dbReference type="HGNC" id="HGNC:20988">
    <property type="gene designation" value="AGPAT4-IT1"/>
</dbReference>
<dbReference type="neXtProt" id="NX_Q9H0P7"/>
<dbReference type="InParanoid" id="Q9H0P7"/>
<dbReference type="PAN-GO" id="Q9H0P7">
    <property type="GO annotations" value="0 GO annotations based on evolutionary models"/>
</dbReference>
<dbReference type="Pharos" id="Q9H0P7">
    <property type="development level" value="Tdark"/>
</dbReference>
<dbReference type="Proteomes" id="UP000005640">
    <property type="component" value="Unplaced"/>
</dbReference>
<dbReference type="RNAct" id="Q9H0P7">
    <property type="molecule type" value="protein"/>
</dbReference>
<proteinExistence type="uncertain"/>
<name>AGIT1_HUMAN</name>
<accession>Q9H0P7</accession>
<accession>A7E1X1</accession>
<accession>Q2M1M7</accession>
<accession>Q5TEF2</accession>
<accession>Q9H5S5</accession>
<keyword id="KW-1185">Reference proteome</keyword>
<sequence length="198" mass="20949">MADTQCCPPPCEFISSAGTDLALGMGWDATLCLLPFTGFGKCAGIWNHMDEEPDNGDDRGSRRTTGQGRKWAAHGTMAAPRVHTDYHPGGGSACSSVKVRSHVGHTGVFFFVDQDPLAVSLTSQSLIPPLIKPGLLKAWGFLLLCAQPSANGHSLCCLLYTDLVSSHELSPFRALCLGPSDAPSACASCNCLASTYYL</sequence>
<evidence type="ECO:0000256" key="1">
    <source>
        <dbReference type="SAM" id="MobiDB-lite"/>
    </source>
</evidence>
<evidence type="ECO:0000305" key="2"/>
<organism>
    <name type="scientific">Homo sapiens</name>
    <name type="common">Human</name>
    <dbReference type="NCBI Taxonomy" id="9606"/>
    <lineage>
        <taxon>Eukaryota</taxon>
        <taxon>Metazoa</taxon>
        <taxon>Chordata</taxon>
        <taxon>Craniata</taxon>
        <taxon>Vertebrata</taxon>
        <taxon>Euteleostomi</taxon>
        <taxon>Mammalia</taxon>
        <taxon>Eutheria</taxon>
        <taxon>Euarchontoglires</taxon>
        <taxon>Primates</taxon>
        <taxon>Haplorrhini</taxon>
        <taxon>Catarrhini</taxon>
        <taxon>Hominidae</taxon>
        <taxon>Homo</taxon>
    </lineage>
</organism>
<feature type="chain" id="PRO_0000089511" description="Putative uncharacterized protein encoded by AGPAT4-IT1">
    <location>
        <begin position="1"/>
        <end position="198"/>
    </location>
</feature>
<feature type="region of interest" description="Disordered" evidence="1">
    <location>
        <begin position="51"/>
        <end position="74"/>
    </location>
</feature>